<proteinExistence type="inferred from homology"/>
<comment type="function">
    <text evidence="1">Peptidoglycan polymerase that catalyzes glycan chain elongation from lipid-linked precursors.</text>
</comment>
<comment type="catalytic activity">
    <reaction evidence="1">
        <text>[GlcNAc-(1-&gt;4)-Mur2Ac(oyl-L-Ala-gamma-D-Glu-L-Lys-D-Ala-D-Ala)](n)-di-trans,octa-cis-undecaprenyl diphosphate + beta-D-GlcNAc-(1-&gt;4)-Mur2Ac(oyl-L-Ala-gamma-D-Glu-L-Lys-D-Ala-D-Ala)-di-trans,octa-cis-undecaprenyl diphosphate = [GlcNAc-(1-&gt;4)-Mur2Ac(oyl-L-Ala-gamma-D-Glu-L-Lys-D-Ala-D-Ala)](n+1)-di-trans,octa-cis-undecaprenyl diphosphate + di-trans,octa-cis-undecaprenyl diphosphate + H(+)</text>
        <dbReference type="Rhea" id="RHEA:23708"/>
        <dbReference type="Rhea" id="RHEA-COMP:9602"/>
        <dbReference type="Rhea" id="RHEA-COMP:9603"/>
        <dbReference type="ChEBI" id="CHEBI:15378"/>
        <dbReference type="ChEBI" id="CHEBI:58405"/>
        <dbReference type="ChEBI" id="CHEBI:60033"/>
        <dbReference type="ChEBI" id="CHEBI:78435"/>
        <dbReference type="EC" id="2.4.99.28"/>
    </reaction>
</comment>
<comment type="pathway">
    <text evidence="1">Cell wall biogenesis; peptidoglycan biosynthesis.</text>
</comment>
<comment type="subcellular location">
    <subcellularLocation>
        <location evidence="1">Cell inner membrane</location>
        <topology evidence="1">Single-pass membrane protein</topology>
    </subcellularLocation>
</comment>
<comment type="similarity">
    <text evidence="1">Belongs to the glycosyltransferase 51 family.</text>
</comment>
<keyword id="KW-0997">Cell inner membrane</keyword>
<keyword id="KW-1003">Cell membrane</keyword>
<keyword id="KW-0133">Cell shape</keyword>
<keyword id="KW-0961">Cell wall biogenesis/degradation</keyword>
<keyword id="KW-0328">Glycosyltransferase</keyword>
<keyword id="KW-0472">Membrane</keyword>
<keyword id="KW-0573">Peptidoglycan synthesis</keyword>
<keyword id="KW-0808">Transferase</keyword>
<keyword id="KW-0812">Transmembrane</keyword>
<keyword id="KW-1133">Transmembrane helix</keyword>
<name>MTGA_ACIBC</name>
<dbReference type="EC" id="2.4.99.28" evidence="1"/>
<dbReference type="EMBL" id="CP000863">
    <property type="protein sequence ID" value="ACC56262.1"/>
    <property type="molecule type" value="Genomic_DNA"/>
</dbReference>
<dbReference type="RefSeq" id="WP_000642933.1">
    <property type="nucleotide sequence ID" value="NZ_CP031380.1"/>
</dbReference>
<dbReference type="SMR" id="B2HVP6"/>
<dbReference type="CAZy" id="GT51">
    <property type="family name" value="Glycosyltransferase Family 51"/>
</dbReference>
<dbReference type="GeneID" id="92892951"/>
<dbReference type="KEGG" id="abc:ACICU_00950"/>
<dbReference type="HOGENOM" id="CLU_006354_1_1_6"/>
<dbReference type="UniPathway" id="UPA00219"/>
<dbReference type="Proteomes" id="UP000008839">
    <property type="component" value="Chromosome"/>
</dbReference>
<dbReference type="GO" id="GO:0009274">
    <property type="term" value="C:peptidoglycan-based cell wall"/>
    <property type="evidence" value="ECO:0007669"/>
    <property type="project" value="InterPro"/>
</dbReference>
<dbReference type="GO" id="GO:0005886">
    <property type="term" value="C:plasma membrane"/>
    <property type="evidence" value="ECO:0007669"/>
    <property type="project" value="UniProtKB-SubCell"/>
</dbReference>
<dbReference type="GO" id="GO:0016763">
    <property type="term" value="F:pentosyltransferase activity"/>
    <property type="evidence" value="ECO:0007669"/>
    <property type="project" value="InterPro"/>
</dbReference>
<dbReference type="GO" id="GO:0008955">
    <property type="term" value="F:peptidoglycan glycosyltransferase activity"/>
    <property type="evidence" value="ECO:0007669"/>
    <property type="project" value="UniProtKB-UniRule"/>
</dbReference>
<dbReference type="GO" id="GO:0071555">
    <property type="term" value="P:cell wall organization"/>
    <property type="evidence" value="ECO:0007669"/>
    <property type="project" value="UniProtKB-KW"/>
</dbReference>
<dbReference type="GO" id="GO:0009252">
    <property type="term" value="P:peptidoglycan biosynthetic process"/>
    <property type="evidence" value="ECO:0007669"/>
    <property type="project" value="UniProtKB-UniRule"/>
</dbReference>
<dbReference type="GO" id="GO:0008360">
    <property type="term" value="P:regulation of cell shape"/>
    <property type="evidence" value="ECO:0007669"/>
    <property type="project" value="UniProtKB-KW"/>
</dbReference>
<dbReference type="Gene3D" id="1.10.3810.10">
    <property type="entry name" value="Biosynthetic peptidoglycan transglycosylase-like"/>
    <property type="match status" value="1"/>
</dbReference>
<dbReference type="HAMAP" id="MF_00766">
    <property type="entry name" value="PGT_MtgA"/>
    <property type="match status" value="1"/>
</dbReference>
<dbReference type="InterPro" id="IPR001264">
    <property type="entry name" value="Glyco_trans_51"/>
</dbReference>
<dbReference type="InterPro" id="IPR023346">
    <property type="entry name" value="Lysozyme-like_dom_sf"/>
</dbReference>
<dbReference type="InterPro" id="IPR036950">
    <property type="entry name" value="PBP_transglycosylase"/>
</dbReference>
<dbReference type="InterPro" id="IPR011812">
    <property type="entry name" value="Pep_trsgly"/>
</dbReference>
<dbReference type="NCBIfam" id="TIGR02070">
    <property type="entry name" value="mono_pep_trsgly"/>
    <property type="match status" value="1"/>
</dbReference>
<dbReference type="PANTHER" id="PTHR30400:SF0">
    <property type="entry name" value="BIOSYNTHETIC PEPTIDOGLYCAN TRANSGLYCOSYLASE"/>
    <property type="match status" value="1"/>
</dbReference>
<dbReference type="PANTHER" id="PTHR30400">
    <property type="entry name" value="MONOFUNCTIONAL BIOSYNTHETIC PEPTIDOGLYCAN TRANSGLYCOSYLASE"/>
    <property type="match status" value="1"/>
</dbReference>
<dbReference type="Pfam" id="PF00912">
    <property type="entry name" value="Transgly"/>
    <property type="match status" value="1"/>
</dbReference>
<dbReference type="SUPFAM" id="SSF53955">
    <property type="entry name" value="Lysozyme-like"/>
    <property type="match status" value="1"/>
</dbReference>
<protein>
    <recommendedName>
        <fullName evidence="1">Biosynthetic peptidoglycan transglycosylase</fullName>
        <ecNumber evidence="1">2.4.99.28</ecNumber>
    </recommendedName>
    <alternativeName>
        <fullName evidence="1">Glycan polymerase</fullName>
    </alternativeName>
    <alternativeName>
        <fullName evidence="1">Peptidoglycan glycosyltransferase MtgA</fullName>
        <shortName evidence="1">PGT</shortName>
    </alternativeName>
</protein>
<gene>
    <name evidence="1" type="primary">mtgA</name>
    <name type="ordered locus">ACICU_00950</name>
</gene>
<accession>B2HVP6</accession>
<organism>
    <name type="scientific">Acinetobacter baumannii (strain ACICU)</name>
    <dbReference type="NCBI Taxonomy" id="405416"/>
    <lineage>
        <taxon>Bacteria</taxon>
        <taxon>Pseudomonadati</taxon>
        <taxon>Pseudomonadota</taxon>
        <taxon>Gammaproteobacteria</taxon>
        <taxon>Moraxellales</taxon>
        <taxon>Moraxellaceae</taxon>
        <taxon>Acinetobacter</taxon>
        <taxon>Acinetobacter calcoaceticus/baumannii complex</taxon>
    </lineage>
</organism>
<sequence>MKAFIVRVLLIFIGAILLIQLWIFSSLVWWRTHEVDTTMFMRIDYWSDPSEPIIHEWLDYDDISDNFKHAILAGEDAKFIHHHGFDWDGIRFALERNNEQGEVVAGGSTVSQQLAKNLFLYNKRSFIRKGQETVATWMMERMWSKRRILEVYMNSVEFGKNLYGVEAAAQYYYGKSAKSLTREQAAFLAALLPDPKYYQDHRNDRKLQYRKRVILRYMNSTQIPE</sequence>
<evidence type="ECO:0000255" key="1">
    <source>
        <dbReference type="HAMAP-Rule" id="MF_00766"/>
    </source>
</evidence>
<feature type="chain" id="PRO_1000133581" description="Biosynthetic peptidoglycan transglycosylase">
    <location>
        <begin position="1"/>
        <end position="225"/>
    </location>
</feature>
<feature type="transmembrane region" description="Helical" evidence="1">
    <location>
        <begin position="8"/>
        <end position="28"/>
    </location>
</feature>
<reference key="1">
    <citation type="journal article" date="2008" name="Antimicrob. Agents Chemother.">
        <title>Whole-genome pyrosequencing of an epidemic multidrug-resistant Acinetobacter baumannii strain belonging to the European clone II group.</title>
        <authorList>
            <person name="Iacono M."/>
            <person name="Villa L."/>
            <person name="Fortini D."/>
            <person name="Bordoni R."/>
            <person name="Imperi F."/>
            <person name="Bonnal R.J."/>
            <person name="Sicheritz-Ponten T."/>
            <person name="De Bellis G."/>
            <person name="Visca P."/>
            <person name="Cassone A."/>
            <person name="Carattoli A."/>
        </authorList>
    </citation>
    <scope>NUCLEOTIDE SEQUENCE [LARGE SCALE GENOMIC DNA]</scope>
    <source>
        <strain>ACICU</strain>
    </source>
</reference>